<proteinExistence type="evidence at protein level"/>
<organism>
    <name type="scientific">Rattus norvegicus</name>
    <name type="common">Rat</name>
    <dbReference type="NCBI Taxonomy" id="10116"/>
    <lineage>
        <taxon>Eukaryota</taxon>
        <taxon>Metazoa</taxon>
        <taxon>Chordata</taxon>
        <taxon>Craniata</taxon>
        <taxon>Vertebrata</taxon>
        <taxon>Euteleostomi</taxon>
        <taxon>Mammalia</taxon>
        <taxon>Eutheria</taxon>
        <taxon>Euarchontoglires</taxon>
        <taxon>Glires</taxon>
        <taxon>Rodentia</taxon>
        <taxon>Myomorpha</taxon>
        <taxon>Muroidea</taxon>
        <taxon>Muridae</taxon>
        <taxon>Murinae</taxon>
        <taxon>Rattus</taxon>
    </lineage>
</organism>
<evidence type="ECO:0000250" key="1"/>
<evidence type="ECO:0000250" key="2">
    <source>
        <dbReference type="UniProtKB" id="P42209"/>
    </source>
</evidence>
<evidence type="ECO:0000250" key="3">
    <source>
        <dbReference type="UniProtKB" id="Q8WYJ6"/>
    </source>
</evidence>
<evidence type="ECO:0000255" key="4">
    <source>
        <dbReference type="PROSITE-ProRule" id="PRU01056"/>
    </source>
</evidence>
<evidence type="ECO:0000256" key="5">
    <source>
        <dbReference type="SAM" id="MobiDB-lite"/>
    </source>
</evidence>
<evidence type="ECO:0000305" key="6"/>
<evidence type="ECO:0000312" key="7">
    <source>
        <dbReference type="RGD" id="1307216"/>
    </source>
</evidence>
<evidence type="ECO:0007744" key="8">
    <source>
    </source>
</evidence>
<gene>
    <name evidence="3" type="primary">Septin1</name>
    <name evidence="7" type="synonym">Sept1</name>
</gene>
<protein>
    <recommendedName>
        <fullName evidence="6">Septin-1</fullName>
    </recommendedName>
</protein>
<reference key="1">
    <citation type="journal article" date="2004" name="Genome Res.">
        <title>The status, quality, and expansion of the NIH full-length cDNA project: the Mammalian Gene Collection (MGC).</title>
        <authorList>
            <consortium name="The MGC Project Team"/>
        </authorList>
    </citation>
    <scope>NUCLEOTIDE SEQUENCE [LARGE SCALE MRNA]</scope>
    <source>
        <tissue>Thymus</tissue>
    </source>
</reference>
<reference key="2">
    <citation type="journal article" date="2012" name="Nat. Commun.">
        <title>Quantitative maps of protein phosphorylation sites across 14 different rat organs and tissues.</title>
        <authorList>
            <person name="Lundby A."/>
            <person name="Secher A."/>
            <person name="Lage K."/>
            <person name="Nordsborg N.B."/>
            <person name="Dmytriyev A."/>
            <person name="Lundby C."/>
            <person name="Olsen J.V."/>
        </authorList>
    </citation>
    <scope>PHOSPHORYLATION [LARGE SCALE ANALYSIS] AT SER-206</scope>
    <scope>IDENTIFICATION BY MASS SPECTROMETRY [LARGE SCALE ANALYSIS]</scope>
</reference>
<sequence length="366" mass="42058">MDKEYVGFAALPNQLHRKSVKKGFDFTLMVAGESGLGKSTLINSLFLTNLYEDRQVPDASARTTQTLTIERRGVEIEEGGIKVKLTLVDTPGFGDSVDCSDCWLPVVRFIEEQFEQYLRDESGLNRKNIQDSRVHCCLYFISPFGRGLRPLDVAFLRAVHEKVNIIPVIGKADALLPRETQVLKQKIRDQLKEEEINIYQFPECDSDEDEEFKKQNEEMKENIPFAVVGSSEVVREGTRPVRGRRYSWGTVEVENPHHCDFLNLRRMLVQTHLQDLKEVTHDLLYEGYRARCLQSLARPGARDRASRSKLSRQSATEIPLPMLPLADTEKLIREKDEELRRMQEMLEKMQAQMQQSQAQGEQSDVL</sequence>
<keyword id="KW-0131">Cell cycle</keyword>
<keyword id="KW-0132">Cell division</keyword>
<keyword id="KW-0963">Cytoplasm</keyword>
<keyword id="KW-0206">Cytoskeleton</keyword>
<keyword id="KW-0342">GTP-binding</keyword>
<keyword id="KW-0547">Nucleotide-binding</keyword>
<keyword id="KW-0597">Phosphoprotein</keyword>
<keyword id="KW-1185">Reference proteome</keyword>
<comment type="function">
    <text evidence="1 6">Filament-forming cytoskeletal GTPase (By similarity). May play a role in cytokinesis (Potential).</text>
</comment>
<comment type="subunit">
    <text evidence="1">Septins polymerize into heterooligomeric protein complexes that form filaments, and can associate with cellular membranes, actin filaments and microtubules. GTPase activity is required for filament formation (By similarity). Interacts with AURKB (By similarity).</text>
</comment>
<comment type="subcellular location">
    <subcellularLocation>
        <location evidence="1">Cytoplasm</location>
    </subcellularLocation>
    <subcellularLocation>
        <location evidence="1">Cytoplasm</location>
        <location evidence="1">Cytoskeleton</location>
    </subcellularLocation>
    <subcellularLocation>
        <location evidence="1">Cytoplasm</location>
        <location evidence="1">Cytoskeleton</location>
        <location evidence="1">Microtubule organizing center</location>
        <location evidence="1">Centrosome</location>
    </subcellularLocation>
    <subcellularLocation>
        <location evidence="1">Midbody</location>
    </subcellularLocation>
    <text evidence="1">Remains at the centrosomes and the nearby microtubules throughout mitosis. Localizes to the midbody during cytokinesis (By similarity).</text>
</comment>
<comment type="similarity">
    <text evidence="4">Belongs to the TRAFAC class TrmE-Era-EngA-EngB-Septin-like GTPase superfamily. Septin GTPase family.</text>
</comment>
<accession>Q5EB96</accession>
<name>SEPT1_RAT</name>
<dbReference type="EMBL" id="BC089897">
    <property type="protein sequence ID" value="AAH89897.1"/>
    <property type="molecule type" value="mRNA"/>
</dbReference>
<dbReference type="RefSeq" id="NP_001012478.1">
    <property type="nucleotide sequence ID" value="NM_001012460.1"/>
</dbReference>
<dbReference type="SMR" id="Q5EB96"/>
<dbReference type="FunCoup" id="Q5EB96">
    <property type="interactions" value="72"/>
</dbReference>
<dbReference type="STRING" id="10116.ENSRNOP00000051893"/>
<dbReference type="iPTMnet" id="Q5EB96"/>
<dbReference type="PhosphoSitePlus" id="Q5EB96"/>
<dbReference type="PaxDb" id="10116-ENSRNOP00000051893"/>
<dbReference type="Ensembl" id="ENSRNOT00000055012.3">
    <property type="protein sequence ID" value="ENSRNOP00000051893.2"/>
    <property type="gene ID" value="ENSRNOG00000017804.6"/>
</dbReference>
<dbReference type="GeneID" id="293507"/>
<dbReference type="KEGG" id="rno:293507"/>
<dbReference type="UCSC" id="RGD:1307216">
    <property type="organism name" value="rat"/>
</dbReference>
<dbReference type="AGR" id="RGD:1307216"/>
<dbReference type="CTD" id="1731"/>
<dbReference type="RGD" id="1307216">
    <property type="gene designation" value="Septin1"/>
</dbReference>
<dbReference type="eggNOG" id="KOG2655">
    <property type="taxonomic scope" value="Eukaryota"/>
</dbReference>
<dbReference type="GeneTree" id="ENSGT00940000161794"/>
<dbReference type="HOGENOM" id="CLU_017718_0_0_1"/>
<dbReference type="InParanoid" id="Q5EB96"/>
<dbReference type="OMA" id="EMKGSIP"/>
<dbReference type="OrthoDB" id="416553at2759"/>
<dbReference type="PhylomeDB" id="Q5EB96"/>
<dbReference type="TreeFam" id="TF101079"/>
<dbReference type="PRO" id="PR:Q5EB96"/>
<dbReference type="Proteomes" id="UP000002494">
    <property type="component" value="Chromosome 1"/>
</dbReference>
<dbReference type="Bgee" id="ENSRNOG00000017804">
    <property type="expression patterns" value="Expressed in thymus and 19 other cell types or tissues"/>
</dbReference>
<dbReference type="GO" id="GO:0032153">
    <property type="term" value="C:cell division site"/>
    <property type="evidence" value="ECO:0000318"/>
    <property type="project" value="GO_Central"/>
</dbReference>
<dbReference type="GO" id="GO:0005813">
    <property type="term" value="C:centrosome"/>
    <property type="evidence" value="ECO:0007669"/>
    <property type="project" value="UniProtKB-SubCell"/>
</dbReference>
<dbReference type="GO" id="GO:0072687">
    <property type="term" value="C:meiotic spindle"/>
    <property type="evidence" value="ECO:0000266"/>
    <property type="project" value="RGD"/>
</dbReference>
<dbReference type="GO" id="GO:0015630">
    <property type="term" value="C:microtubule cytoskeleton"/>
    <property type="evidence" value="ECO:0000318"/>
    <property type="project" value="GO_Central"/>
</dbReference>
<dbReference type="GO" id="GO:0030496">
    <property type="term" value="C:midbody"/>
    <property type="evidence" value="ECO:0000266"/>
    <property type="project" value="RGD"/>
</dbReference>
<dbReference type="GO" id="GO:0031105">
    <property type="term" value="C:septin complex"/>
    <property type="evidence" value="ECO:0000318"/>
    <property type="project" value="GO_Central"/>
</dbReference>
<dbReference type="GO" id="GO:0005940">
    <property type="term" value="C:septin ring"/>
    <property type="evidence" value="ECO:0000318"/>
    <property type="project" value="GO_Central"/>
</dbReference>
<dbReference type="GO" id="GO:0008021">
    <property type="term" value="C:synaptic vesicle"/>
    <property type="evidence" value="ECO:0000318"/>
    <property type="project" value="GO_Central"/>
</dbReference>
<dbReference type="GO" id="GO:0005525">
    <property type="term" value="F:GTP binding"/>
    <property type="evidence" value="ECO:0007669"/>
    <property type="project" value="UniProtKB-KW"/>
</dbReference>
<dbReference type="GO" id="GO:0003924">
    <property type="term" value="F:GTPase activity"/>
    <property type="evidence" value="ECO:0000318"/>
    <property type="project" value="GO_Central"/>
</dbReference>
<dbReference type="GO" id="GO:0042802">
    <property type="term" value="F:identical protein binding"/>
    <property type="evidence" value="ECO:0000266"/>
    <property type="project" value="RGD"/>
</dbReference>
<dbReference type="GO" id="GO:0060090">
    <property type="term" value="F:molecular adaptor activity"/>
    <property type="evidence" value="ECO:0000318"/>
    <property type="project" value="GO_Central"/>
</dbReference>
<dbReference type="GO" id="GO:0061640">
    <property type="term" value="P:cytoskeleton-dependent cytokinesis"/>
    <property type="evidence" value="ECO:0000318"/>
    <property type="project" value="GO_Central"/>
</dbReference>
<dbReference type="GO" id="GO:0051311">
    <property type="term" value="P:meiotic metaphase chromosome alignment"/>
    <property type="evidence" value="ECO:0000266"/>
    <property type="project" value="RGD"/>
</dbReference>
<dbReference type="GO" id="GO:0008104">
    <property type="term" value="P:protein localization"/>
    <property type="evidence" value="ECO:0000318"/>
    <property type="project" value="GO_Central"/>
</dbReference>
<dbReference type="GO" id="GO:0017157">
    <property type="term" value="P:regulation of exocytosis"/>
    <property type="evidence" value="ECO:0000318"/>
    <property type="project" value="GO_Central"/>
</dbReference>
<dbReference type="GO" id="GO:0007056">
    <property type="term" value="P:spindle assembly involved in female meiosis"/>
    <property type="evidence" value="ECO:0000266"/>
    <property type="project" value="RGD"/>
</dbReference>
<dbReference type="CDD" id="cd01850">
    <property type="entry name" value="CDC_Septin"/>
    <property type="match status" value="1"/>
</dbReference>
<dbReference type="FunFam" id="3.40.50.300:FF:001012">
    <property type="entry name" value="Septin 1"/>
    <property type="match status" value="1"/>
</dbReference>
<dbReference type="Gene3D" id="3.40.50.300">
    <property type="entry name" value="P-loop containing nucleotide triphosphate hydrolases"/>
    <property type="match status" value="1"/>
</dbReference>
<dbReference type="InterPro" id="IPR030379">
    <property type="entry name" value="G_SEPTIN_dom"/>
</dbReference>
<dbReference type="InterPro" id="IPR027417">
    <property type="entry name" value="P-loop_NTPase"/>
</dbReference>
<dbReference type="InterPro" id="IPR016491">
    <property type="entry name" value="Septin"/>
</dbReference>
<dbReference type="PANTHER" id="PTHR18884">
    <property type="entry name" value="SEPTIN"/>
    <property type="match status" value="1"/>
</dbReference>
<dbReference type="Pfam" id="PF00735">
    <property type="entry name" value="Septin"/>
    <property type="match status" value="1"/>
</dbReference>
<dbReference type="PIRSF" id="PIRSF006698">
    <property type="entry name" value="Septin"/>
    <property type="match status" value="1"/>
</dbReference>
<dbReference type="SUPFAM" id="SSF52540">
    <property type="entry name" value="P-loop containing nucleoside triphosphate hydrolases"/>
    <property type="match status" value="1"/>
</dbReference>
<dbReference type="PROSITE" id="PS51719">
    <property type="entry name" value="G_SEPTIN"/>
    <property type="match status" value="1"/>
</dbReference>
<feature type="chain" id="PRO_0000363219" description="Septin-1">
    <location>
        <begin position="1"/>
        <end position="366"/>
    </location>
</feature>
<feature type="domain" description="Septin-type G" evidence="4">
    <location>
        <begin position="22"/>
        <end position="295"/>
    </location>
</feature>
<feature type="region of interest" description="G1 motif" evidence="4">
    <location>
        <begin position="32"/>
        <end position="39"/>
    </location>
</feature>
<feature type="region of interest" description="G3 motif" evidence="4">
    <location>
        <begin position="89"/>
        <end position="92"/>
    </location>
</feature>
<feature type="region of interest" description="G4 motif" evidence="4">
    <location>
        <begin position="170"/>
        <end position="173"/>
    </location>
</feature>
<feature type="region of interest" description="Disordered" evidence="5">
    <location>
        <begin position="347"/>
        <end position="366"/>
    </location>
</feature>
<feature type="compositionally biased region" description="Low complexity" evidence="5">
    <location>
        <begin position="349"/>
        <end position="366"/>
    </location>
</feature>
<feature type="binding site" evidence="1">
    <location>
        <begin position="32"/>
        <end position="39"/>
    </location>
    <ligand>
        <name>GTP</name>
        <dbReference type="ChEBI" id="CHEBI:37565"/>
    </ligand>
</feature>
<feature type="binding site" evidence="1">
    <location>
        <position position="66"/>
    </location>
    <ligand>
        <name>GTP</name>
        <dbReference type="ChEBI" id="CHEBI:37565"/>
    </ligand>
</feature>
<feature type="binding site" evidence="1">
    <location>
        <position position="92"/>
    </location>
    <ligand>
        <name>GTP</name>
        <dbReference type="ChEBI" id="CHEBI:37565"/>
    </ligand>
</feature>
<feature type="binding site" evidence="1">
    <location>
        <begin position="171"/>
        <end position="179"/>
    </location>
    <ligand>
        <name>GTP</name>
        <dbReference type="ChEBI" id="CHEBI:37565"/>
    </ligand>
</feature>
<feature type="binding site" evidence="1">
    <location>
        <position position="229"/>
    </location>
    <ligand>
        <name>GTP</name>
        <dbReference type="ChEBI" id="CHEBI:37565"/>
    </ligand>
</feature>
<feature type="binding site" evidence="1">
    <location>
        <position position="244"/>
    </location>
    <ligand>
        <name>GTP</name>
        <dbReference type="ChEBI" id="CHEBI:37565"/>
    </ligand>
</feature>
<feature type="modified residue" description="Phosphoserine" evidence="8">
    <location>
        <position position="206"/>
    </location>
</feature>
<feature type="modified residue" description="Phosphoserine; by AURKB" evidence="3">
    <location>
        <position position="247"/>
    </location>
</feature>
<feature type="modified residue" description="Phosphothreonine" evidence="2">
    <location>
        <position position="250"/>
    </location>
</feature>
<feature type="modified residue" description="Phosphoserine; by AURKB" evidence="3">
    <location>
        <position position="306"/>
    </location>
</feature>
<feature type="modified residue" description="Phosphoserine; by AURKB" evidence="3">
    <location>
        <position position="314"/>
    </location>
</feature>